<feature type="initiator methionine" description="Removed; by host" evidence="2">
    <location>
        <position position="1"/>
    </location>
</feature>
<feature type="chain" id="PRO_0000426416" description="Genome polyprotein">
    <location>
        <begin position="2"/>
        <end position="2193"/>
    </location>
</feature>
<feature type="chain" id="PRO_0000426417" description="P1">
    <location>
        <begin position="2"/>
        <end position="855"/>
    </location>
</feature>
<feature type="chain" id="PRO_0000426418" description="Capsid protein VP0">
    <location>
        <begin position="2"/>
        <end position="330"/>
    </location>
</feature>
<feature type="chain" id="PRO_0000426419" description="Capsid protein VP4">
    <location>
        <begin position="2"/>
        <end position="69"/>
    </location>
</feature>
<feature type="chain" id="PRO_0000426420" description="Capsid protein VP2">
    <location>
        <begin position="70"/>
        <end position="330"/>
    </location>
</feature>
<feature type="chain" id="PRO_0000426421" description="Capsid protein VP3">
    <location>
        <begin position="331"/>
        <end position="569"/>
    </location>
</feature>
<feature type="chain" id="PRO_0000426422" description="Capsid protein VP1">
    <location>
        <begin position="570"/>
        <end position="855"/>
    </location>
</feature>
<feature type="chain" id="PRO_0000426423" description="P2">
    <location>
        <begin position="856"/>
        <end position="1437"/>
    </location>
</feature>
<feature type="chain" id="PRO_0000426424" description="Protease 2A">
    <location>
        <begin position="856"/>
        <end position="1009"/>
    </location>
</feature>
<feature type="chain" id="PRO_0000039697" description="Protein 2B">
    <location>
        <begin position="1010"/>
        <end position="1108"/>
    </location>
</feature>
<feature type="chain" id="PRO_0000039698" description="Protein 2C">
    <location>
        <begin position="1109"/>
        <end position="1437"/>
    </location>
</feature>
<feature type="chain" id="PRO_0000426425" description="P3">
    <location>
        <begin position="1438"/>
        <end position="2193"/>
    </location>
</feature>
<feature type="chain" id="PRO_0000426426" description="Protein 3AB">
    <location>
        <begin position="1438"/>
        <end position="1548"/>
    </location>
</feature>
<feature type="chain" id="PRO_0000039699" description="Protein 3A">
    <location>
        <begin position="1438"/>
        <end position="1526"/>
    </location>
</feature>
<feature type="chain" id="PRO_0000426427" description="Viral protein genome-linked">
    <location>
        <begin position="1527"/>
        <end position="1548"/>
    </location>
</feature>
<feature type="chain" id="PRO_0000426428" description="Protein 3CD">
    <location>
        <begin position="1549"/>
        <end position="2193"/>
    </location>
</feature>
<feature type="chain" id="PRO_0000426429" description="Protease 3C">
    <location>
        <begin position="1549"/>
        <end position="1731"/>
    </location>
</feature>
<feature type="chain" id="PRO_0000426430" description="RNA-directed RNA polymerase">
    <location>
        <begin position="1732"/>
        <end position="2193"/>
    </location>
</feature>
<feature type="topological domain" description="Cytoplasmic" evidence="9">
    <location>
        <begin position="2"/>
        <end position="1503"/>
    </location>
</feature>
<feature type="intramembrane region" evidence="9">
    <location>
        <begin position="1504"/>
        <end position="1519"/>
    </location>
</feature>
<feature type="topological domain" description="Cytoplasmic" evidence="9">
    <location>
        <begin position="1520"/>
        <end position="2193"/>
    </location>
</feature>
<feature type="domain" description="SF3 helicase" evidence="11">
    <location>
        <begin position="1213"/>
        <end position="1369"/>
    </location>
</feature>
<feature type="domain" description="Peptidase C3" evidence="12">
    <location>
        <begin position="1549"/>
        <end position="1727"/>
    </location>
</feature>
<feature type="domain" description="RdRp catalytic" evidence="10">
    <location>
        <begin position="1958"/>
        <end position="2074"/>
    </location>
</feature>
<feature type="zinc finger region" description="C4-type; degenerate" evidence="1">
    <location>
        <begin position="1377"/>
        <end position="1394"/>
    </location>
</feature>
<feature type="region of interest" description="Amphipathic alpha-helix" evidence="9">
    <location>
        <begin position="567"/>
        <end position="583"/>
    </location>
</feature>
<feature type="region of interest" description="Oligomerization" evidence="2">
    <location>
        <begin position="1109"/>
        <end position="1247"/>
    </location>
</feature>
<feature type="region of interest" description="Membrane-binding" evidence="2">
    <location>
        <begin position="1109"/>
        <end position="1181"/>
    </location>
</feature>
<feature type="region of interest" description="RNA-binding" evidence="2">
    <location>
        <begin position="1130"/>
        <end position="1134"/>
    </location>
</feature>
<feature type="region of interest" description="RNA-binding" evidence="2">
    <location>
        <begin position="1421"/>
        <end position="1428"/>
    </location>
</feature>
<feature type="region of interest" description="Oligomerization" evidence="2">
    <location>
        <begin position="1432"/>
        <end position="1437"/>
    </location>
</feature>
<feature type="active site" description="For protease 2A activity" evidence="2">
    <location>
        <position position="880"/>
    </location>
</feature>
<feature type="active site" description="For protease 2A activity" evidence="2">
    <location>
        <position position="898"/>
    </location>
</feature>
<feature type="active site" description="For protease 2A activity" evidence="2">
    <location>
        <position position="969"/>
    </location>
</feature>
<feature type="active site" description="For protease 3C activity" evidence="12">
    <location>
        <position position="1588"/>
    </location>
</feature>
<feature type="active site" description="For protease 3C activity" evidence="12">
    <location>
        <position position="1619"/>
    </location>
</feature>
<feature type="active site" description="For protease 3C activity" evidence="12">
    <location>
        <position position="1695"/>
    </location>
</feature>
<feature type="binding site" evidence="8">
    <location>
        <position position="915"/>
    </location>
    <ligand>
        <name>Zn(2+)</name>
        <dbReference type="ChEBI" id="CHEBI:29105"/>
        <label>1</label>
        <note>structural</note>
    </ligand>
</feature>
<feature type="binding site" evidence="8">
    <location>
        <position position="917"/>
    </location>
    <ligand>
        <name>Zn(2+)</name>
        <dbReference type="ChEBI" id="CHEBI:29105"/>
        <label>1</label>
        <note>structural</note>
    </ligand>
</feature>
<feature type="binding site" evidence="8">
    <location>
        <position position="975"/>
    </location>
    <ligand>
        <name>Zn(2+)</name>
        <dbReference type="ChEBI" id="CHEBI:29105"/>
        <label>1</label>
        <note>structural</note>
    </ligand>
</feature>
<feature type="binding site" evidence="8">
    <location>
        <position position="977"/>
    </location>
    <ligand>
        <name>Zn(2+)</name>
        <dbReference type="ChEBI" id="CHEBI:29105"/>
        <label>1</label>
        <note>structural</note>
    </ligand>
</feature>
<feature type="binding site" evidence="1">
    <location>
        <position position="1377"/>
    </location>
    <ligand>
        <name>Zn(2+)</name>
        <dbReference type="ChEBI" id="CHEBI:29105"/>
        <label>2</label>
    </ligand>
</feature>
<feature type="binding site" evidence="1">
    <location>
        <position position="1389"/>
    </location>
    <ligand>
        <name>Zn(2+)</name>
        <dbReference type="ChEBI" id="CHEBI:29105"/>
        <label>2</label>
    </ligand>
</feature>
<feature type="binding site" evidence="1">
    <location>
        <position position="1394"/>
    </location>
    <ligand>
        <name>Zn(2+)</name>
        <dbReference type="ChEBI" id="CHEBI:29105"/>
        <label>2</label>
    </ligand>
</feature>
<feature type="binding site" evidence="2">
    <location>
        <position position="1964"/>
    </location>
    <ligand>
        <name>Mg(2+)</name>
        <dbReference type="ChEBI" id="CHEBI:18420"/>
        <label>1</label>
        <note>catalytic; for RdRp activity</note>
    </ligand>
</feature>
<feature type="binding site" evidence="2">
    <location>
        <position position="1964"/>
    </location>
    <ligand>
        <name>Mg(2+)</name>
        <dbReference type="ChEBI" id="CHEBI:18420"/>
        <label>2</label>
        <note>catalytic; for RdRp activity</note>
    </ligand>
</feature>
<feature type="binding site" evidence="2">
    <location>
        <position position="2060"/>
    </location>
    <ligand>
        <name>Mg(2+)</name>
        <dbReference type="ChEBI" id="CHEBI:18420"/>
        <label>1</label>
        <note>catalytic; for RdRp activity</note>
    </ligand>
</feature>
<feature type="binding site" evidence="2">
    <location>
        <position position="2060"/>
    </location>
    <ligand>
        <name>Mg(2+)</name>
        <dbReference type="ChEBI" id="CHEBI:18420"/>
        <label>2</label>
        <note>catalytic; for RdRp activity</note>
    </ligand>
</feature>
<feature type="site" description="Cleavage; by autolysis" evidence="2">
    <location>
        <begin position="69"/>
        <end position="70"/>
    </location>
</feature>
<feature type="site" description="Cleavage; by protease 3C" evidence="3">
    <location>
        <begin position="330"/>
        <end position="331"/>
    </location>
</feature>
<feature type="site" description="Cleavage; by autolysis" evidence="3">
    <location>
        <begin position="855"/>
        <end position="856"/>
    </location>
</feature>
<feature type="site" description="Cleavage; by protease 3C" evidence="3">
    <location>
        <begin position="1009"/>
        <end position="1010"/>
    </location>
</feature>
<feature type="site" description="Cleavage; by protease 3C" evidence="3">
    <location>
        <begin position="1108"/>
        <end position="1109"/>
    </location>
</feature>
<feature type="site" description="Involved in the interaction with host RTN3" evidence="7">
    <location>
        <position position="1133"/>
    </location>
</feature>
<feature type="site" description="Cleavage; by protease 3C" evidence="3">
    <location>
        <begin position="1437"/>
        <end position="1438"/>
    </location>
</feature>
<feature type="site" description="Cleavage; by protease 3C" evidence="3">
    <location>
        <begin position="1526"/>
        <end position="1527"/>
    </location>
</feature>
<feature type="site" description="Cleavage; by protease 3C" evidence="3">
    <location>
        <begin position="1548"/>
        <end position="1549"/>
    </location>
</feature>
<feature type="site" description="Cleavage; by protease 3C" evidence="3">
    <location>
        <begin position="1731"/>
        <end position="1732"/>
    </location>
</feature>
<feature type="modified residue" description="O-(5'-phospho-RNA)-tyrosine" evidence="2">
    <location>
        <position position="1529"/>
    </location>
</feature>
<feature type="lipid moiety-binding region" description="N-myristoyl glycine; by host" evidence="2">
    <location>
        <position position="2"/>
    </location>
</feature>
<accession>Q66849</accession>
<comment type="function">
    <molecule>Capsid protein VP1</molecule>
    <text evidence="2">Forms an icosahedral capsid of pseudo T=3 symmetry with capsid proteins VP2 and VP3 (By similarity). The capsid is 300 Angstroms in diameter, composed of 60 copies of each capsid protein and enclosing the viral positive strand RNA genome (By similarity). Capsid protein VP1 mainly forms the vertices of the capsid (By similarity). Capsid protein VP1 interacts with host cell receptor to provide virion attachment to target host cells (By similarity). This attachment induces virion internalization (By similarity). Tyrosine kinases are probably involved in the entry process (By similarity). After binding to its receptor, the capsid undergoes conformational changes (By similarity). Capsid protein VP1 N-terminus (that contains an amphipathic alpha-helix) and capsid protein VP4 are externalized (By similarity). Together, they shape a pore in the host membrane through which viral genome is translocated to host cell cytoplasm (By similarity).</text>
</comment>
<comment type="function">
    <molecule>Capsid protein VP2</molecule>
    <text evidence="2">Forms an icosahedral capsid of pseudo T=3 symmetry with capsid proteins VP2 and VP3 (By similarity). The capsid is 300 Angstroms in diameter, composed of 60 copies of each capsid protein and enclosing the viral positive strand RNA genome (By similarity).</text>
</comment>
<comment type="function">
    <molecule>Capsid protein VP3</molecule>
    <text evidence="2">Forms an icosahedral capsid of pseudo T=3 symmetry with capsid proteins VP2 and VP3 (By similarity). The capsid is 300 Angstroms in diameter, composed of 60 copies of each capsid protein and enclosing the viral positive strand RNA genome (By similarity).</text>
</comment>
<comment type="function">
    <molecule>Capsid protein VP4</molecule>
    <text evidence="2">Lies on the inner surface of the capsid shell (By similarity). After binding to the host receptor, the capsid undergoes conformational changes (By similarity). Capsid protein VP4 is released, Capsid protein VP1 N-terminus is externalized, and together, they shape a pore in the host membrane through which the viral genome is translocated into the host cell cytoplasm (By similarity).</text>
</comment>
<comment type="function">
    <molecule>Capsid protein VP0</molecule>
    <text evidence="2">Component of immature procapsids, which is cleaved into capsid proteins VP4 and VP2 after maturation (By similarity). Allows the capsid to remain inactive before the maturation step (By similarity).</text>
</comment>
<comment type="function">
    <molecule>Protease 2A</molecule>
    <text evidence="2 3">Cysteine protease that cleaves viral polyprotein and specific host proteins (By similarity). It is responsible for the autocatalytic cleavage between the P1 and P2 regions, which is the first cleavage occurring in the polyprotein (By similarity). Also cleaves the host translation initiation factor EIF4G1, in order to shut down the capped cellular mRNA translation (By similarity). Inhibits the host nucleus-cytoplasm protein and RNA trafficking by cleaving host members of the nuclear pores (By similarity). Counteracts stress granule formation probably by antagonizing its assembly or promoting its dissassembly (By similarity).</text>
</comment>
<comment type="function">
    <molecule>Protein 2B</molecule>
    <text evidence="2">Plays an essential role in the virus replication cycle by acting as a viroporin. Creates a pore in the host endoplasmic reticulum and as a consequence releases Ca2+ in the cytoplasm of infected cell. In turn, high levels of cytoplasmic calcium may trigger membrane trafficking and transport of viral ER-associated proteins to viroplasms, sites of viral genome replication.</text>
</comment>
<comment type="function">
    <molecule>Protein 2C</molecule>
    <text evidence="2">Induces and associates with structural rearrangements of intracellular membranes. Displays RNA-binding, nucleotide binding and NTPase activities. May play a role in virion morphogenesis and viral RNA encapsidation by interacting with the capsid protein VP3.</text>
</comment>
<comment type="function">
    <molecule>Protein 3AB</molecule>
    <text evidence="2">Localizes the viral replication complex to the surface of membranous vesicles. Together with protein 3CD binds the Cis-Active RNA Element (CRE) which is involved in RNA synthesis initiation. Acts as a cofactor to stimulate the activity of 3D polymerase, maybe through a nucleid acid chaperone activity.</text>
</comment>
<comment type="function">
    <molecule>Protein 3A</molecule>
    <text evidence="2 5">Localizes the viral replication complex to the surface of membranous vesicles (By similarity). It inhibits host cell endoplasmic reticulum-to-Golgi apparatus transport and causes the disassembly of the Golgi complex, possibly through GBF1 interaction (By similarity). This would result in depletion of MHC, trail receptors and IFN receptors at the host cell surface (By similarity). Plays an essential role in viral RNA replication by recruiting ACBD3 and PI4KB at the viral replication sites, thereby allowing the formation of the rearranged membranous structures where viral replication takes place (By similarity).</text>
</comment>
<comment type="function">
    <molecule>Viral protein genome-linked</molecule>
    <text evidence="2">Acts as a primer for viral RNA replication and remains covalently bound to viral genomic RNA. VPg is uridylylated prior to priming replication into VPg-pUpU. The oriI viral genomic sequence may act as a template for this. The VPg-pUpU is then used as primer on the genomic RNA poly(A) by the RNA-dependent RNA polymerase to replicate the viral genome. During genome replication, the VPg-RNA linkage is removed by the host TDP2, thereby accelerating replication. During the late stage of the replication cycle, host TDP2 is excluded from sites of viral RNA synthesis and encapsidation, allowing for the generation of progeny virions.</text>
</comment>
<comment type="function">
    <molecule>Protein 3CD</molecule>
    <text evidence="2">Involved in the viral replication complex and viral polypeptide maturation. It exhibits protease activity with a specificity and catalytic efficiency that is different from protease 3C. Protein 3CD lacks polymerase activity. Protein 3CD binds to the 5'UTR of the viral genome.</text>
</comment>
<comment type="function">
    <molecule>RNA-directed RNA polymerase</molecule>
    <text evidence="2">Replicates the viral genomic RNA on the surface of intracellular membranes. May form linear arrays of subunits that propagate along a strong head-to-tail interaction called interface-I. Covalently attaches UMP to a tyrosine of VPg, which is used to prime RNA synthesis. The positive stranded RNA genome is first replicated at virus induced membranous vesicles, creating a dsRNA genomic replication form. This dsRNA is then used as template to synthesize positive stranded RNA genomes. ss(+)RNA genomes are either translated, replicated or encapsidated.</text>
</comment>
<comment type="function">
    <molecule>Protease 3C</molecule>
    <text evidence="2 4">Major viral protease that mediates proteolytic processing of the polyprotein (By similarity). Cleaves host EIF5B, contributing to host translation shutoff (By similarity). Also cleaves host PABPC1, contributing to host translation shutoff (By similarity). Cleaves host NLRP1, triggers host N-glycine-mediated degradation of the autoinhibitory NLRP1 N-terminal fragment (By similarity).</text>
</comment>
<comment type="catalytic activity">
    <molecule>Protein 2C</molecule>
    <reaction evidence="2">
        <text>a ribonucleoside 5'-triphosphate + H2O = a ribonucleoside 5'-diphosphate + phosphate + H(+)</text>
        <dbReference type="Rhea" id="RHEA:23680"/>
        <dbReference type="ChEBI" id="CHEBI:15377"/>
        <dbReference type="ChEBI" id="CHEBI:15378"/>
        <dbReference type="ChEBI" id="CHEBI:43474"/>
        <dbReference type="ChEBI" id="CHEBI:57930"/>
        <dbReference type="ChEBI" id="CHEBI:61557"/>
        <dbReference type="EC" id="3.6.1.15"/>
    </reaction>
</comment>
<comment type="catalytic activity">
    <molecule>Protease 2A</molecule>
    <reaction evidence="2">
        <text>Selective cleavage of Tyr-|-Gly bond in the picornavirus polyprotein.</text>
        <dbReference type="EC" id="3.4.22.29"/>
    </reaction>
</comment>
<comment type="catalytic activity">
    <molecule>RNA-directed RNA polymerase</molecule>
    <reaction evidence="10">
        <text>RNA(n) + a ribonucleoside 5'-triphosphate = RNA(n+1) + diphosphate</text>
        <dbReference type="Rhea" id="RHEA:21248"/>
        <dbReference type="Rhea" id="RHEA-COMP:14527"/>
        <dbReference type="Rhea" id="RHEA-COMP:17342"/>
        <dbReference type="ChEBI" id="CHEBI:33019"/>
        <dbReference type="ChEBI" id="CHEBI:61557"/>
        <dbReference type="ChEBI" id="CHEBI:140395"/>
        <dbReference type="EC" id="2.7.7.48"/>
    </reaction>
</comment>
<comment type="catalytic activity">
    <molecule>Protease 3C</molecule>
    <reaction evidence="12">
        <text>Selective cleavage of Gln-|-Gly bond in the poliovirus polyprotein. In other picornavirus reactions Glu may be substituted for Gln, and Ser or Thr for Gly.</text>
        <dbReference type="EC" id="3.4.22.28"/>
    </reaction>
</comment>
<comment type="cofactor">
    <molecule>RNA-directed RNA polymerase</molecule>
    <cofactor evidence="2">
        <name>Mg(2+)</name>
        <dbReference type="ChEBI" id="CHEBI:18420"/>
    </cofactor>
    <text evidence="2 5">Binds 2 magnesium ions that constitute a dinuclear catalytic metal center (By similarity). The magnesium ions are not prebound but only present for catalysis (By similarity). Requires the presence of 3CDpro or 3CPro (By similarity).</text>
</comment>
<comment type="activity regulation">
    <molecule>RNA-directed RNA polymerase</molecule>
    <text evidence="2">Replication or transcription is subject to high level of random mutations by the nucleotide analog ribavirin.</text>
</comment>
<comment type="subunit">
    <molecule>Capsid protein VP0</molecule>
    <text evidence="2">Interacts with capsid protein VP1 and capsid protein VP3 to form heterotrimeric protomers.</text>
</comment>
<comment type="subunit">
    <molecule>Capsid protein VP1</molecule>
    <text evidence="2">Interacts with capsid protein VP0, and capsid protein VP3 to form heterotrimeric protomers (By similarity). Five protomers subsequently associate to form pentamers which serve as building blocks for the capsid (By similarity). Interacts with capsid protein VP2, capsid protein VP3 and capsid protein VP4 following cleavage of capsid protein VP0 (By similarity).</text>
</comment>
<comment type="subunit">
    <molecule>Capsid protein VP2</molecule>
    <text evidence="2">Interacts with capsid protein VP1 and capsid protein VP3 in the mature capsid.</text>
</comment>
<comment type="subunit">
    <molecule>Capsid protein VP3</molecule>
    <text evidence="2">Interacts with capsid protein VP0 and capsid protein VP1 to form heterotrimeric protomers (By similarity). Five protomers subsequently associate to form pentamers which serve as building blocks for the capsid (By similarity). Interacts with capsid protein VP4 in the mature capsid (By similarity). Interacts with protein 2C; this interaction may be important for virion morphogenesis (By similarity).</text>
</comment>
<comment type="subunit">
    <molecule>Capsid protein VP4</molecule>
    <text evidence="2">Interacts with capsid protein VP1 and capsid protein VP3.</text>
</comment>
<comment type="subunit">
    <molecule>Protease 2A</molecule>
    <text evidence="6">Homodimer.</text>
</comment>
<comment type="subunit">
    <molecule>Protein 2C</molecule>
    <text evidence="2">Homohexamer; forms a hexameric ring structure with 6-fold symmetry characteristic of AAA+ ATPases (By similarity). Interacts (via N-terminus) with host RTN3 (via reticulon domain); this interaction is important for viral replication (By similarity). Interacts with capsid protein VP3; this interaction may be important for virion morphogenesis (By similarity).</text>
</comment>
<comment type="subunit">
    <molecule>Protein 3AB</molecule>
    <text evidence="2">Interacts with protein 3CD.</text>
</comment>
<comment type="subunit">
    <molecule>Protein 3A</molecule>
    <text evidence="2">Homodimer (By similarity). Interacts with host GBF1 (By similarity). Interacts (via GOLD domain) with host ACBD3 (via GOLD domain); this interaction allows the formation of a viral protein 3A/ACBD3 heterotetramer with a 2:2 stoichiometry, which will stimulate the recruitment of host PI4KB in order to synthesize PI4P at the viral RNA replication sites (By similarity).</text>
</comment>
<comment type="subunit">
    <molecule>Viral protein genome-linked</molecule>
    <text evidence="2">Interacts with RNA-directed RNA polymerase.</text>
</comment>
<comment type="subunit">
    <molecule>Protein 3CD</molecule>
    <text evidence="2">Interacts with protein 3AB and with RNA-directed RNA polymerase.</text>
</comment>
<comment type="subunit">
    <molecule>RNA-directed RNA polymerase</molecule>
    <text evidence="2">Interacts with Viral protein genome-linked and with protein 3CD.</text>
</comment>
<comment type="subcellular location">
    <molecule>Capsid protein VP0</molecule>
    <subcellularLocation>
        <location>Virion</location>
    </subcellularLocation>
    <subcellularLocation>
        <location evidence="13">Host cytoplasm</location>
    </subcellularLocation>
</comment>
<comment type="subcellular location">
    <molecule>Capsid protein VP4</molecule>
    <subcellularLocation>
        <location>Virion</location>
    </subcellularLocation>
</comment>
<comment type="subcellular location">
    <molecule>Capsid protein VP2</molecule>
    <subcellularLocation>
        <location evidence="2">Virion</location>
    </subcellularLocation>
    <subcellularLocation>
        <location evidence="13">Host cytoplasm</location>
    </subcellularLocation>
</comment>
<comment type="subcellular location">
    <molecule>Capsid protein VP3</molecule>
    <subcellularLocation>
        <location evidence="2">Virion</location>
    </subcellularLocation>
    <subcellularLocation>
        <location evidence="13">Host cytoplasm</location>
    </subcellularLocation>
</comment>
<comment type="subcellular location">
    <molecule>Capsid protein VP1</molecule>
    <subcellularLocation>
        <location evidence="2">Virion</location>
    </subcellularLocation>
    <subcellularLocation>
        <location evidence="13">Host cytoplasm</location>
    </subcellularLocation>
</comment>
<comment type="subcellular location">
    <molecule>Protein 2B</molecule>
    <subcellularLocation>
        <location evidence="13">Host cytoplasmic vesicle membrane</location>
        <topology evidence="13">Peripheral membrane protein</topology>
        <orientation evidence="13">Cytoplasmic side</orientation>
    </subcellularLocation>
    <text>Probably localizes to the surface of intracellular membrane vesicles that are induced after virus infection as the site for viral RNA replication. These vesicles are derived from the endoplasmic reticulum.</text>
</comment>
<comment type="subcellular location">
    <molecule>Protein 2C</molecule>
    <subcellularLocation>
        <location evidence="13">Host cytoplasmic vesicle membrane</location>
        <topology evidence="13">Peripheral membrane protein</topology>
        <orientation evidence="13">Cytoplasmic side</orientation>
    </subcellularLocation>
    <text>Probably localizes to the surface of intracellular membrane vesicles that are induced after virus infection as the site for viral RNA replication. These vesicles are derived from the endoplasmic reticulum.</text>
</comment>
<comment type="subcellular location">
    <molecule>Protein 3A</molecule>
    <subcellularLocation>
        <location evidence="13">Host cytoplasmic vesicle membrane</location>
        <topology evidence="13">Peripheral membrane protein</topology>
        <orientation evidence="13">Cytoplasmic side</orientation>
    </subcellularLocation>
    <text>Probably localizes to the surface of intracellular membrane vesicles that are induced after virus infection as the site for viral RNA replication. These vesicles are derived from the endoplasmic reticulum.</text>
</comment>
<comment type="subcellular location">
    <molecule>Protein 3AB</molecule>
    <subcellularLocation>
        <location evidence="13">Host cytoplasmic vesicle membrane</location>
        <topology evidence="13">Peripheral membrane protein</topology>
        <orientation evidence="13">Cytoplasmic side</orientation>
    </subcellularLocation>
    <text>Probably localizes to the surface of intracellular membrane vesicles that are induced after virus infection as the site for viral RNA replication. These vesicles are derived from the endoplasmic reticulum.</text>
</comment>
<comment type="subcellular location">
    <molecule>Viral protein genome-linked</molecule>
    <subcellularLocation>
        <location evidence="2">Virion</location>
    </subcellularLocation>
    <subcellularLocation>
        <location evidence="7">Host cytoplasm</location>
    </subcellularLocation>
</comment>
<comment type="subcellular location">
    <molecule>Protease 3C</molecule>
    <subcellularLocation>
        <location>Host cytoplasm</location>
    </subcellularLocation>
</comment>
<comment type="subcellular location">
    <molecule>Protein 3CD</molecule>
    <subcellularLocation>
        <location evidence="2">Host nucleus</location>
    </subcellularLocation>
    <subcellularLocation>
        <location evidence="2">Host cytoplasm</location>
    </subcellularLocation>
    <subcellularLocation>
        <location evidence="13">Host cytoplasmic vesicle membrane</location>
        <topology evidence="13">Peripheral membrane protein</topology>
        <orientation evidence="13">Cytoplasmic side</orientation>
    </subcellularLocation>
    <text>Probably localizes to the surface of intracellular membrane vesicles that are induced after virus infection as the site for viral RNA replication. These vesicles are derived from the endoplasmic reticulum.</text>
</comment>
<comment type="subcellular location">
    <molecule>RNA-directed RNA polymerase</molecule>
    <subcellularLocation>
        <location evidence="13">Host cytoplasmic vesicle membrane</location>
        <topology evidence="13">Peripheral membrane protein</topology>
        <orientation evidence="13">Cytoplasmic side</orientation>
    </subcellularLocation>
    <text>Probably localizes to the surface of intracellular membrane vesicles that are induced after virus infection as the site for viral RNA replication. These vesicles are derived from the endoplasmic reticulum.</text>
</comment>
<comment type="domain">
    <molecule>Protein 2C</molecule>
    <text evidence="1 2">The N-terminus has membrane-binding (By similarity). The N-terminus also displays RNA-binding properties (By similarity). The N-terminus is involved in oligomerization (By similarity). The central part contains an ATPase domain and a degenerate C4-type zinc-finger with only 3 cysteines (By similarity). The C-terminus is involved in RNA-binding (By similarity). The extreme C-terminus contains a region involved in oligomerization (By similarity).</text>
</comment>
<comment type="PTM">
    <molecule>Genome polyprotein</molecule>
    <text evidence="2">Specific enzymatic cleavages in vivo by the viral proteases yield processing intermediates and the mature proteins.</text>
</comment>
<comment type="PTM">
    <molecule>Capsid protein VP0</molecule>
    <text evidence="2">Myristoylation is required for the formation of pentamers during virus assembly. Further assembly of 12 pentamers and a molecule of genomic RNA generates the provirion.</text>
</comment>
<comment type="PTM">
    <molecule>Capsid protein VP0</molecule>
    <text evidence="2">During virion maturation, immature virions are rendered infectious following cleavage of VP0 into VP4 and VP2. This maturation seems to be an autocatalytic event triggered by the presence of RNA in the capsid and it is followed by a conformational change infectious virion.</text>
</comment>
<comment type="PTM">
    <molecule>Capsid protein VP4</molecule>
    <text evidence="2">Myristoylation is required during RNA encapsidation and formation of the mature virus particle.</text>
</comment>
<comment type="PTM">
    <molecule>Viral protein genome-linked</molecule>
    <text evidence="2">VPg is uridylylated by the polymerase into VPg-pUpU. This acts as a nucleotide-peptide primer for the genomic RNA replication.</text>
</comment>
<comment type="similarity">
    <text evidence="13">Belongs to the picornaviruses polyprotein family.</text>
</comment>
<dbReference type="EC" id="3.4.22.29" evidence="2"/>
<dbReference type="EC" id="3.6.1.15" evidence="2"/>
<dbReference type="EC" id="3.4.22.28" evidence="12"/>
<dbReference type="EC" id="2.7.7.48" evidence="10"/>
<dbReference type="EMBL" id="X84981">
    <property type="protein sequence ID" value="CAA59341.1"/>
    <property type="molecule type" value="Genomic_RNA"/>
</dbReference>
<dbReference type="SMR" id="Q66849"/>
<dbReference type="MEROPS" id="C03.011"/>
<dbReference type="Proteomes" id="UP000008272">
    <property type="component" value="Genome"/>
</dbReference>
<dbReference type="GO" id="GO:0044162">
    <property type="term" value="C:host cell cytoplasmic vesicle membrane"/>
    <property type="evidence" value="ECO:0007669"/>
    <property type="project" value="UniProtKB-SubCell"/>
</dbReference>
<dbReference type="GO" id="GO:0042025">
    <property type="term" value="C:host cell nucleus"/>
    <property type="evidence" value="ECO:0007669"/>
    <property type="project" value="UniProtKB-SubCell"/>
</dbReference>
<dbReference type="GO" id="GO:0016020">
    <property type="term" value="C:membrane"/>
    <property type="evidence" value="ECO:0007669"/>
    <property type="project" value="UniProtKB-KW"/>
</dbReference>
<dbReference type="GO" id="GO:0039618">
    <property type="term" value="C:T=pseudo3 icosahedral viral capsid"/>
    <property type="evidence" value="ECO:0007669"/>
    <property type="project" value="UniProtKB-KW"/>
</dbReference>
<dbReference type="GO" id="GO:0005524">
    <property type="term" value="F:ATP binding"/>
    <property type="evidence" value="ECO:0007669"/>
    <property type="project" value="UniProtKB-KW"/>
</dbReference>
<dbReference type="GO" id="GO:0016887">
    <property type="term" value="F:ATP hydrolysis activity"/>
    <property type="evidence" value="ECO:0007669"/>
    <property type="project" value="InterPro"/>
</dbReference>
<dbReference type="GO" id="GO:0015267">
    <property type="term" value="F:channel activity"/>
    <property type="evidence" value="ECO:0007669"/>
    <property type="project" value="UniProtKB-KW"/>
</dbReference>
<dbReference type="GO" id="GO:0004197">
    <property type="term" value="F:cysteine-type endopeptidase activity"/>
    <property type="evidence" value="ECO:0007669"/>
    <property type="project" value="UniProtKB-EC"/>
</dbReference>
<dbReference type="GO" id="GO:0003723">
    <property type="term" value="F:RNA binding"/>
    <property type="evidence" value="ECO:0007669"/>
    <property type="project" value="UniProtKB-KW"/>
</dbReference>
<dbReference type="GO" id="GO:0003724">
    <property type="term" value="F:RNA helicase activity"/>
    <property type="evidence" value="ECO:0007669"/>
    <property type="project" value="InterPro"/>
</dbReference>
<dbReference type="GO" id="GO:0003968">
    <property type="term" value="F:RNA-directed RNA polymerase activity"/>
    <property type="evidence" value="ECO:0007669"/>
    <property type="project" value="UniProtKB-KW"/>
</dbReference>
<dbReference type="GO" id="GO:0005198">
    <property type="term" value="F:structural molecule activity"/>
    <property type="evidence" value="ECO:0007669"/>
    <property type="project" value="InterPro"/>
</dbReference>
<dbReference type="GO" id="GO:0008270">
    <property type="term" value="F:zinc ion binding"/>
    <property type="evidence" value="ECO:0007669"/>
    <property type="project" value="UniProtKB-KW"/>
</dbReference>
<dbReference type="GO" id="GO:0006260">
    <property type="term" value="P:DNA replication"/>
    <property type="evidence" value="ECO:0007669"/>
    <property type="project" value="UniProtKB-KW"/>
</dbReference>
<dbReference type="GO" id="GO:0006351">
    <property type="term" value="P:DNA-templated transcription"/>
    <property type="evidence" value="ECO:0007669"/>
    <property type="project" value="InterPro"/>
</dbReference>
<dbReference type="GO" id="GO:0075509">
    <property type="term" value="P:endocytosis involved in viral entry into host cell"/>
    <property type="evidence" value="ECO:0007669"/>
    <property type="project" value="UniProtKB-KW"/>
</dbReference>
<dbReference type="GO" id="GO:0034220">
    <property type="term" value="P:monoatomic ion transmembrane transport"/>
    <property type="evidence" value="ECO:0007669"/>
    <property type="project" value="UniProtKB-KW"/>
</dbReference>
<dbReference type="GO" id="GO:0006508">
    <property type="term" value="P:proteolysis"/>
    <property type="evidence" value="ECO:0007669"/>
    <property type="project" value="UniProtKB-KW"/>
</dbReference>
<dbReference type="GO" id="GO:0044694">
    <property type="term" value="P:symbiont genome entry into host cell via pore formation in plasma membrane"/>
    <property type="evidence" value="ECO:0007669"/>
    <property type="project" value="UniProtKB-KW"/>
</dbReference>
<dbReference type="GO" id="GO:0039520">
    <property type="term" value="P:symbiont-mediated activation of host autophagy"/>
    <property type="evidence" value="ECO:0000250"/>
    <property type="project" value="UniProtKB"/>
</dbReference>
<dbReference type="GO" id="GO:0039540">
    <property type="term" value="P:symbiont-mediated suppression of host cytoplasmic pattern recognition receptor signaling pathway via inhibition of RIG-I activity"/>
    <property type="evidence" value="ECO:0007669"/>
    <property type="project" value="UniProtKB-KW"/>
</dbReference>
<dbReference type="GO" id="GO:0039522">
    <property type="term" value="P:symbiont-mediated suppression of host mRNA export from nucleus"/>
    <property type="evidence" value="ECO:0007669"/>
    <property type="project" value="UniProtKB-KW"/>
</dbReference>
<dbReference type="GO" id="GO:0039694">
    <property type="term" value="P:viral RNA genome replication"/>
    <property type="evidence" value="ECO:0007669"/>
    <property type="project" value="InterPro"/>
</dbReference>
<dbReference type="GO" id="GO:0019062">
    <property type="term" value="P:virion attachment to host cell"/>
    <property type="evidence" value="ECO:0007669"/>
    <property type="project" value="UniProtKB-KW"/>
</dbReference>
<dbReference type="CDD" id="cd23213">
    <property type="entry name" value="Enterovirus_RdRp"/>
    <property type="match status" value="1"/>
</dbReference>
<dbReference type="CDD" id="cd00205">
    <property type="entry name" value="rhv_like"/>
    <property type="match status" value="3"/>
</dbReference>
<dbReference type="FunFam" id="1.20.960.20:FF:000001">
    <property type="entry name" value="Genome polyprotein"/>
    <property type="match status" value="1"/>
</dbReference>
<dbReference type="FunFam" id="2.40.10.10:FF:000018">
    <property type="entry name" value="Genome polyprotein"/>
    <property type="match status" value="1"/>
</dbReference>
<dbReference type="FunFam" id="2.40.10.10:FF:000020">
    <property type="entry name" value="Genome polyprotein"/>
    <property type="match status" value="1"/>
</dbReference>
<dbReference type="FunFam" id="2.40.10.10:FF:000022">
    <property type="entry name" value="Genome polyprotein"/>
    <property type="match status" value="1"/>
</dbReference>
<dbReference type="FunFam" id="2.60.120.20:FF:000001">
    <property type="entry name" value="Genome polyprotein"/>
    <property type="match status" value="1"/>
</dbReference>
<dbReference type="FunFam" id="2.60.120.20:FF:000002">
    <property type="entry name" value="Genome polyprotein"/>
    <property type="match status" value="1"/>
</dbReference>
<dbReference type="FunFam" id="2.60.120.20:FF:000004">
    <property type="entry name" value="Genome polyprotein"/>
    <property type="match status" value="1"/>
</dbReference>
<dbReference type="FunFam" id="3.30.70.270:FF:000008">
    <property type="entry name" value="Genome polyprotein"/>
    <property type="match status" value="1"/>
</dbReference>
<dbReference type="FunFam" id="4.10.80.10:FF:000001">
    <property type="entry name" value="Genome polyprotein"/>
    <property type="match status" value="1"/>
</dbReference>
<dbReference type="FunFam" id="4.10.880.10:FF:000001">
    <property type="entry name" value="Genome polyprotein"/>
    <property type="match status" value="1"/>
</dbReference>
<dbReference type="FunFam" id="4.10.880.10:FF:000002">
    <property type="entry name" value="Genome polyprotein"/>
    <property type="match status" value="1"/>
</dbReference>
<dbReference type="Gene3D" id="1.20.960.20">
    <property type="match status" value="1"/>
</dbReference>
<dbReference type="Gene3D" id="2.60.120.20">
    <property type="match status" value="3"/>
</dbReference>
<dbReference type="Gene3D" id="3.30.70.270">
    <property type="match status" value="1"/>
</dbReference>
<dbReference type="Gene3D" id="4.10.80.10">
    <property type="entry name" value="Picornavirus coat protein VP4"/>
    <property type="match status" value="1"/>
</dbReference>
<dbReference type="Gene3D" id="6.10.20.20">
    <property type="entry name" value="Poliovirus 3A protein-like"/>
    <property type="match status" value="1"/>
</dbReference>
<dbReference type="Gene3D" id="4.10.880.10">
    <property type="entry name" value="Poliovirus 3D polymerase Domain 1 (Nucleotidyltransferase)"/>
    <property type="match status" value="2"/>
</dbReference>
<dbReference type="Gene3D" id="2.40.10.10">
    <property type="entry name" value="Trypsin-like serine proteases"/>
    <property type="match status" value="4"/>
</dbReference>
<dbReference type="InterPro" id="IPR003593">
    <property type="entry name" value="AAA+_ATPase"/>
</dbReference>
<dbReference type="InterPro" id="IPR043502">
    <property type="entry name" value="DNA/RNA_pol_sf"/>
</dbReference>
<dbReference type="InterPro" id="IPR000605">
    <property type="entry name" value="Helicase_SF3_ssDNA/RNA_vir"/>
</dbReference>
<dbReference type="InterPro" id="IPR014759">
    <property type="entry name" value="Helicase_SF3_ssRNA_vir"/>
</dbReference>
<dbReference type="InterPro" id="IPR027417">
    <property type="entry name" value="P-loop_NTPase"/>
</dbReference>
<dbReference type="InterPro" id="IPR014838">
    <property type="entry name" value="P3A"/>
</dbReference>
<dbReference type="InterPro" id="IPR036203">
    <property type="entry name" value="P3A_soluble_dom"/>
</dbReference>
<dbReference type="InterPro" id="IPR044067">
    <property type="entry name" value="PCV_3C_PRO"/>
</dbReference>
<dbReference type="InterPro" id="IPR000081">
    <property type="entry name" value="Peptidase_C3"/>
</dbReference>
<dbReference type="InterPro" id="IPR000199">
    <property type="entry name" value="Peptidase_C3A/C3B_picornavir"/>
</dbReference>
<dbReference type="InterPro" id="IPR009003">
    <property type="entry name" value="Peptidase_S1_PA"/>
</dbReference>
<dbReference type="InterPro" id="IPR043504">
    <property type="entry name" value="Peptidase_S1_PA_chymotrypsin"/>
</dbReference>
<dbReference type="InterPro" id="IPR003138">
    <property type="entry name" value="Pico_P1A"/>
</dbReference>
<dbReference type="InterPro" id="IPR036988">
    <property type="entry name" value="Pico_P1A_sf"/>
</dbReference>
<dbReference type="InterPro" id="IPR002527">
    <property type="entry name" value="Pico_P2B"/>
</dbReference>
<dbReference type="InterPro" id="IPR001676">
    <property type="entry name" value="Picornavirus_capsid"/>
</dbReference>
<dbReference type="InterPro" id="IPR043128">
    <property type="entry name" value="Rev_trsase/Diguanyl_cyclase"/>
</dbReference>
<dbReference type="InterPro" id="IPR033703">
    <property type="entry name" value="Rhv-like"/>
</dbReference>
<dbReference type="InterPro" id="IPR001205">
    <property type="entry name" value="RNA-dir_pol_C"/>
</dbReference>
<dbReference type="InterPro" id="IPR007094">
    <property type="entry name" value="RNA-dir_pol_PSvirus"/>
</dbReference>
<dbReference type="InterPro" id="IPR029053">
    <property type="entry name" value="Viral_coat"/>
</dbReference>
<dbReference type="Pfam" id="PF08727">
    <property type="entry name" value="P3A"/>
    <property type="match status" value="1"/>
</dbReference>
<dbReference type="Pfam" id="PF00548">
    <property type="entry name" value="Peptidase_C3"/>
    <property type="match status" value="1"/>
</dbReference>
<dbReference type="Pfam" id="PF02226">
    <property type="entry name" value="Pico_P1A"/>
    <property type="match status" value="1"/>
</dbReference>
<dbReference type="Pfam" id="PF00947">
    <property type="entry name" value="Pico_P2A"/>
    <property type="match status" value="1"/>
</dbReference>
<dbReference type="Pfam" id="PF01552">
    <property type="entry name" value="Pico_P2B"/>
    <property type="match status" value="1"/>
</dbReference>
<dbReference type="Pfam" id="PF00680">
    <property type="entry name" value="RdRP_1"/>
    <property type="match status" value="1"/>
</dbReference>
<dbReference type="Pfam" id="PF00073">
    <property type="entry name" value="Rhv"/>
    <property type="match status" value="3"/>
</dbReference>
<dbReference type="Pfam" id="PF00910">
    <property type="entry name" value="RNA_helicase"/>
    <property type="match status" value="1"/>
</dbReference>
<dbReference type="SMART" id="SM00382">
    <property type="entry name" value="AAA"/>
    <property type="match status" value="1"/>
</dbReference>
<dbReference type="SUPFAM" id="SSF56672">
    <property type="entry name" value="DNA/RNA polymerases"/>
    <property type="match status" value="1"/>
</dbReference>
<dbReference type="SUPFAM" id="SSF52540">
    <property type="entry name" value="P-loop containing nucleoside triphosphate hydrolases"/>
    <property type="match status" value="1"/>
</dbReference>
<dbReference type="SUPFAM" id="SSF88633">
    <property type="entry name" value="Positive stranded ssRNA viruses"/>
    <property type="match status" value="2"/>
</dbReference>
<dbReference type="SUPFAM" id="SSF89043">
    <property type="entry name" value="Soluble domain of poliovirus core protein 3a"/>
    <property type="match status" value="1"/>
</dbReference>
<dbReference type="SUPFAM" id="SSF50494">
    <property type="entry name" value="Trypsin-like serine proteases"/>
    <property type="match status" value="2"/>
</dbReference>
<dbReference type="PROSITE" id="PS51874">
    <property type="entry name" value="PCV_3C_PRO"/>
    <property type="match status" value="1"/>
</dbReference>
<dbReference type="PROSITE" id="PS50507">
    <property type="entry name" value="RDRP_SSRNA_POS"/>
    <property type="match status" value="1"/>
</dbReference>
<dbReference type="PROSITE" id="PS51218">
    <property type="entry name" value="SF3_HELICASE_2"/>
    <property type="match status" value="1"/>
</dbReference>
<organism>
    <name type="scientific">Echovirus 9 (strain Hill)</name>
    <dbReference type="NCBI Taxonomy" id="103915"/>
    <lineage>
        <taxon>Viruses</taxon>
        <taxon>Riboviria</taxon>
        <taxon>Orthornavirae</taxon>
        <taxon>Pisuviricota</taxon>
        <taxon>Pisoniviricetes</taxon>
        <taxon>Picornavirales</taxon>
        <taxon>Picornaviridae</taxon>
        <taxon>Ensavirinae</taxon>
        <taxon>Enterovirus</taxon>
        <taxon>Enterovirus B</taxon>
    </lineage>
</organism>
<protein>
    <recommendedName>
        <fullName>Genome polyprotein</fullName>
    </recommendedName>
    <component>
        <recommendedName>
            <fullName>P1</fullName>
        </recommendedName>
    </component>
    <component>
        <recommendedName>
            <fullName>Capsid protein VP0</fullName>
        </recommendedName>
        <alternativeName>
            <fullName>VP4-VP2</fullName>
        </alternativeName>
    </component>
    <component>
        <recommendedName>
            <fullName>Capsid protein VP4</fullName>
        </recommendedName>
        <alternativeName>
            <fullName>P1A</fullName>
        </alternativeName>
        <alternativeName>
            <fullName>Virion protein 4</fullName>
        </alternativeName>
    </component>
    <component>
        <recommendedName>
            <fullName>Capsid protein VP2</fullName>
        </recommendedName>
        <alternativeName>
            <fullName>P1B</fullName>
        </alternativeName>
        <alternativeName>
            <fullName>Virion protein 2</fullName>
        </alternativeName>
    </component>
    <component>
        <recommendedName>
            <fullName>Capsid protein VP3</fullName>
        </recommendedName>
        <alternativeName>
            <fullName>P1C</fullName>
        </alternativeName>
        <alternativeName>
            <fullName>Virion protein 3</fullName>
        </alternativeName>
    </component>
    <component>
        <recommendedName>
            <fullName>Capsid protein VP1</fullName>
        </recommendedName>
        <alternativeName>
            <fullName>P1D</fullName>
        </alternativeName>
        <alternativeName>
            <fullName>Virion protein 1</fullName>
        </alternativeName>
    </component>
    <component>
        <recommendedName>
            <fullName>P2</fullName>
        </recommendedName>
    </component>
    <component>
        <recommendedName>
            <fullName>Protease 2A</fullName>
            <shortName>P2A</shortName>
            <ecNumber evidence="2">3.4.22.29</ecNumber>
        </recommendedName>
        <alternativeName>
            <fullName>Picornain 2A</fullName>
        </alternativeName>
        <alternativeName>
            <fullName>Protein 2A</fullName>
        </alternativeName>
    </component>
    <component>
        <recommendedName>
            <fullName>Protein 2B</fullName>
            <shortName>P2B</shortName>
        </recommendedName>
    </component>
    <component>
        <recommendedName>
            <fullName>Protein 2C</fullName>
            <shortName>P2C</shortName>
            <ecNumber evidence="2">3.6.1.15</ecNumber>
        </recommendedName>
    </component>
    <component>
        <recommendedName>
            <fullName>P3</fullName>
        </recommendedName>
    </component>
    <component>
        <recommendedName>
            <fullName>Protein 3AB</fullName>
        </recommendedName>
    </component>
    <component>
        <recommendedName>
            <fullName>Protein 3A</fullName>
            <shortName>P3A</shortName>
        </recommendedName>
    </component>
    <component>
        <recommendedName>
            <fullName>Viral protein genome-linked</fullName>
            <shortName>VPg</shortName>
        </recommendedName>
        <alternativeName>
            <fullName>Protein 3B</fullName>
            <shortName>P3B</shortName>
        </alternativeName>
    </component>
    <component>
        <recommendedName>
            <fullName>Protein 3CD</fullName>
            <ecNumber>3.4.22.28</ecNumber>
        </recommendedName>
    </component>
    <component>
        <recommendedName>
            <fullName evidence="12">Protease 3C</fullName>
            <ecNumber evidence="12">3.4.22.28</ecNumber>
        </recommendedName>
        <alternativeName>
            <fullName evidence="12">Picornain 3C</fullName>
            <shortName evidence="12">P3C</shortName>
        </alternativeName>
    </component>
    <component>
        <recommendedName>
            <fullName evidence="10">RNA-directed RNA polymerase</fullName>
            <shortName>RdRp</shortName>
            <ecNumber evidence="10">2.7.7.48</ecNumber>
        </recommendedName>
        <alternativeName>
            <fullName>3D polymerase</fullName>
            <shortName>3Dpol</shortName>
        </alternativeName>
        <alternativeName>
            <fullName>Protein 3D</fullName>
            <shortName>3D</shortName>
        </alternativeName>
    </component>
</protein>
<reference key="1">
    <citation type="journal article" date="1995" name="Virus Res.">
        <title>Complete nucleotide sequence and biological properties of an infectious clone of prototype echovirus 9.</title>
        <authorList>
            <person name="Zimmermann H."/>
            <person name="Eggers H.J."/>
            <person name="Kruus W."/>
            <person name="Nelsen-Salz B."/>
        </authorList>
    </citation>
    <scope>NUCLEOTIDE SEQUENCE [GENOMIC RNA]</scope>
</reference>
<proteinExistence type="inferred from homology"/>
<keyword id="KW-1072">Activation of host autophagy by virus</keyword>
<keyword id="KW-0067">ATP-binding</keyword>
<keyword id="KW-0068">Autocatalytic cleavage</keyword>
<keyword id="KW-0167">Capsid protein</keyword>
<keyword id="KW-0191">Covalent protein-RNA linkage</keyword>
<keyword id="KW-0235">DNA replication</keyword>
<keyword id="KW-1262">Eukaryotic host gene expression shutoff by virus</keyword>
<keyword id="KW-1193">Eukaryotic host translation shutoff by virus</keyword>
<keyword id="KW-0347">Helicase</keyword>
<keyword id="KW-1035">Host cytoplasm</keyword>
<keyword id="KW-1036">Host cytoplasmic vesicle</keyword>
<keyword id="KW-1190">Host gene expression shutoff by virus</keyword>
<keyword id="KW-1043">Host membrane</keyword>
<keyword id="KW-1192">Host mRNA suppression by virus</keyword>
<keyword id="KW-1048">Host nucleus</keyword>
<keyword id="KW-0945">Host-virus interaction</keyword>
<keyword id="KW-0378">Hydrolase</keyword>
<keyword id="KW-1090">Inhibition of host innate immune response by virus</keyword>
<keyword id="KW-1099">Inhibition of host mRNA nuclear export by virus</keyword>
<keyword id="KW-1088">Inhibition of host RIG-I by virus</keyword>
<keyword id="KW-1113">Inhibition of host RLR pathway by virus</keyword>
<keyword id="KW-0407">Ion channel</keyword>
<keyword id="KW-0406">Ion transport</keyword>
<keyword id="KW-0449">Lipoprotein</keyword>
<keyword id="KW-0460">Magnesium</keyword>
<keyword id="KW-0472">Membrane</keyword>
<keyword id="KW-0479">Metal-binding</keyword>
<keyword id="KW-0519">Myristate</keyword>
<keyword id="KW-0547">Nucleotide-binding</keyword>
<keyword id="KW-0548">Nucleotidyltransferase</keyword>
<keyword id="KW-0597">Phosphoprotein</keyword>
<keyword id="KW-1172">Pore-mediated penetration of viral genome into host cell</keyword>
<keyword id="KW-0645">Protease</keyword>
<keyword id="KW-0677">Repeat</keyword>
<keyword id="KW-0694">RNA-binding</keyword>
<keyword id="KW-0696">RNA-directed RNA polymerase</keyword>
<keyword id="KW-1143">T=pseudo3 icosahedral capsid protein</keyword>
<keyword id="KW-0788">Thiol protease</keyword>
<keyword id="KW-0808">Transferase</keyword>
<keyword id="KW-0813">Transport</keyword>
<keyword id="KW-1161">Viral attachment to host cell</keyword>
<keyword id="KW-0899">Viral immunoevasion</keyword>
<keyword id="KW-1182">Viral ion channel</keyword>
<keyword id="KW-1162">Viral penetration into host cytoplasm</keyword>
<keyword id="KW-0693">Viral RNA replication</keyword>
<keyword id="KW-0946">Virion</keyword>
<keyword id="KW-1164">Virus endocytosis by host</keyword>
<keyword id="KW-1160">Virus entry into host cell</keyword>
<keyword id="KW-0862">Zinc</keyword>
<keyword id="KW-0863">Zinc-finger</keyword>
<name>POLG_EC09H</name>
<sequence>MGAQVSTQKTGAHEASLSATGSSIIHYTNINYYKDSASNSANRQDFTQDPSKFTEPVKDVMIKSLPALNSPSAEECGFSDRVRSITIGNSTITTQECANVVVAYGRWPTYLRDDEATAEDQPTQPDVATCRFYTLESVQWQENSAGWWWKFPDALSNMGLFGQNMLYHYLGRAGYTIHVQCNASKFHQGCLLVVCVPEAEMGCSKVDGVVNAQGLSKGEIPIEFERTSTTAEVGVVQKAVYNAGMGIGVGNLTIFPHQWINLRTNNSATIVIPYINCVPMDNMFRHNNFTLMVIPFAPLKSSGGTNYVPVTITVAPMDAEYNGLRLAGHQGLPTMNTPGSTQFLTSDDFQSPCAMPEFDVTPCMDIPGKVHNLMEIAEVDIGVPVNNTSTHMEGTDAFQIKVTAGNVQDKNAIFSFQLNPGNSTVLRRTLLGEILNYYAHWSGSIKLTFLFCGSAMATGKLLLAYSPPGASVPKARRDAMLGTHVIWDVGLQSSCVLCVPWISQTHYRLVAQDEYTSAGYITCWYQTNIVVPPETPSDCVVLCFVSACNDFSVRMLKDTPFIEQTTELQSDVREAVEGAIGRVADTIRSGPSNSEAVPALTAAETGHTSQVVPSDTMQTRHVKNYHSRSESTIENFLCRSACVRMAKYEARGNLKALTLDAWEISVRDMVQLRRKCEMFTYLRFDVEVTFVITSYQRQGTSSIQICPYDAHQIMYIPPGGPIPKKVDGYEWQTSTNPSIFWTEGNAPPRMSIPFISIGNAYSSFYDGWSHFDSKGAYGFNTLNKMGHIYCRHVNKETPTKVTSYIRIYFKPKHVRAWVPRPPRLCQYMNKANVNFEATAVTDTRDTINTVPLSTHGVSRGAYGHQSGARYVGNYRIVNRHLATHTDWQKCVWEDYNRDLLVSTTTAHGCDTIARCQCTTGVYFCASKNKHYPVSFEGPGLVEVQASEYYPKRYQSHVLLAAGFSEPGDCGGILRCEHGVIGIVTMGGEGVVGFADVRDLLWLEDDAMEQGVKDYVEQLGNAFGSGFTNQICEQVNLLKESLVGQDSILEKSLKALVKIISALVIVVRNHDDLITVTAVLALIGCTTSPWRWLKQKVSQYYGIPMAERQNNRWLKKFTEMTNACKGMEWIAIKIQKFIEWLKIKILPEVKEKHEFLNRLKQLPLLESQIATIEQSAPSQGDQEQLFSNIQYFAHYCRKYAPLYAAEAKRVFSLEKKMSNYIQFKSKCRIEPVCLLLHGSPGAGKSVATNLIGRSLAEKLNSSVYSLPPDPDHFDGYKQQAVVIMDDLCQNPDGKDVSLFCQMVSSVDFVPPMAALEEKGILFTSPFVLASTNAGSINAPTVSDSRALARRFHFDMNIEVISMYSQNGKINMPMSVKTCDEECCPVNFKKCCPLVCGKAIQFIDRRTQVRYSLDMLVTEMFREYNHRHSVGTTLEALFQGPPIYREIKISVAPETPPPPAIADLLKSVDSEAVREYCKEKGWLVPEVNSTLQIEKHVSRAFICLQALTTFVSVAGIIYIIYKLFAGFQGAYTGMPNQKPRVPTLRQAKVQGPAFEFAVAMMKRNSSTVKTEYGEFTMLGIYDRWAVLPRHAKPGPTILMNDQEVGVLDAKELVDKDGTNLELTLLKLNRNEKFRDIRGFLAKEEVEVNEAVLAINTSKFPNMYIPVGQVTDYGFLNLGGTPTKRMLMYNFPTRAGQCGGVLMSTGKVLGIHVGGNGHQGFSAALLKHYFNDEQGEIEFIESSKEAGFPVINTPSKTKLEPSVFHQVFEGNKEPAVLRNGDPRLKANFEEALFSKYIGNVNTHVDEYMLEAVDHYAGQLATLDISTEPMRLEDAVYGTEGLEALDLTTSAGYPYVALGIKKRDILSKKTRDLTKLKECMDKYGLNLPMVTYVKDELRSAEKVAKGKSRLIEASSLNDSVAMRQTFGNLYKTFHLNPGIVTGSASGCDPDLFWSKIPVMLDGHLIAFDYSGYDASLSPVWFACLKLLLEKLGYSHKETNYIDYLCNSHHLYRDKHYFVRGGMPSGCSGTSIFNSMINNIIIRTLMLKVYKGIDLDQFRMIAYGDDVIASYPWPIDASLLAEAGKDYGLIMTPADKGECFNEVTWTNVTFLKRYFRADEQYPFLVHPVMPMKDIHESIRWTKDPKNTQDHVRSLCLLAWHNGEREYEEFIRKIRSVPVGRCLTLPAFSTLRRKWLDSF</sequence>
<organismHost>
    <name type="scientific">Homo sapiens</name>
    <name type="common">Human</name>
    <dbReference type="NCBI Taxonomy" id="9606"/>
</organismHost>
<evidence type="ECO:0000250" key="1">
    <source>
        <dbReference type="UniProtKB" id="B9VUU3"/>
    </source>
</evidence>
<evidence type="ECO:0000250" key="2">
    <source>
        <dbReference type="UniProtKB" id="P03300"/>
    </source>
</evidence>
<evidence type="ECO:0000250" key="3">
    <source>
        <dbReference type="UniProtKB" id="P03301"/>
    </source>
</evidence>
<evidence type="ECO:0000250" key="4">
    <source>
        <dbReference type="UniProtKB" id="P03303"/>
    </source>
</evidence>
<evidence type="ECO:0000250" key="5">
    <source>
        <dbReference type="UniProtKB" id="P03313"/>
    </source>
</evidence>
<evidence type="ECO:0000250" key="6">
    <source>
        <dbReference type="UniProtKB" id="P04936"/>
    </source>
</evidence>
<evidence type="ECO:0000250" key="7">
    <source>
        <dbReference type="UniProtKB" id="Q66478"/>
    </source>
</evidence>
<evidence type="ECO:0000250" key="8">
    <source>
        <dbReference type="UniProtKB" id="Q9QF31"/>
    </source>
</evidence>
<evidence type="ECO:0000255" key="9"/>
<evidence type="ECO:0000255" key="10">
    <source>
        <dbReference type="PROSITE-ProRule" id="PRU00539"/>
    </source>
</evidence>
<evidence type="ECO:0000255" key="11">
    <source>
        <dbReference type="PROSITE-ProRule" id="PRU00551"/>
    </source>
</evidence>
<evidence type="ECO:0000255" key="12">
    <source>
        <dbReference type="PROSITE-ProRule" id="PRU01222"/>
    </source>
</evidence>
<evidence type="ECO:0000305" key="13"/>